<keyword id="KW-0150">Chloroplast</keyword>
<keyword id="KW-0472">Membrane</keyword>
<keyword id="KW-0520">NAD</keyword>
<keyword id="KW-0521">NADP</keyword>
<keyword id="KW-0934">Plastid</keyword>
<keyword id="KW-0618">Plastoquinone</keyword>
<keyword id="KW-0874">Quinone</keyword>
<keyword id="KW-0793">Thylakoid</keyword>
<keyword id="KW-1278">Translocase</keyword>
<keyword id="KW-0812">Transmembrane</keyword>
<keyword id="KW-1133">Transmembrane helix</keyword>
<keyword id="KW-0813">Transport</keyword>
<comment type="function">
    <text evidence="1">NDH shuttles electrons from NAD(P)H:plastoquinone, via FMN and iron-sulfur (Fe-S) centers, to quinones in the photosynthetic chain and possibly in a chloroplast respiratory chain. The immediate electron acceptor for the enzyme in this species is believed to be plastoquinone. Couples the redox reaction to proton translocation, and thus conserves the redox energy in a proton gradient (By similarity).</text>
</comment>
<comment type="catalytic activity">
    <reaction>
        <text>a plastoquinone + NADH + (n+1) H(+)(in) = a plastoquinol + NAD(+) + n H(+)(out)</text>
        <dbReference type="Rhea" id="RHEA:42608"/>
        <dbReference type="Rhea" id="RHEA-COMP:9561"/>
        <dbReference type="Rhea" id="RHEA-COMP:9562"/>
        <dbReference type="ChEBI" id="CHEBI:15378"/>
        <dbReference type="ChEBI" id="CHEBI:17757"/>
        <dbReference type="ChEBI" id="CHEBI:57540"/>
        <dbReference type="ChEBI" id="CHEBI:57945"/>
        <dbReference type="ChEBI" id="CHEBI:62192"/>
    </reaction>
</comment>
<comment type="catalytic activity">
    <reaction>
        <text>a plastoquinone + NADPH + (n+1) H(+)(in) = a plastoquinol + NADP(+) + n H(+)(out)</text>
        <dbReference type="Rhea" id="RHEA:42612"/>
        <dbReference type="Rhea" id="RHEA-COMP:9561"/>
        <dbReference type="Rhea" id="RHEA-COMP:9562"/>
        <dbReference type="ChEBI" id="CHEBI:15378"/>
        <dbReference type="ChEBI" id="CHEBI:17757"/>
        <dbReference type="ChEBI" id="CHEBI:57783"/>
        <dbReference type="ChEBI" id="CHEBI:58349"/>
        <dbReference type="ChEBI" id="CHEBI:62192"/>
    </reaction>
</comment>
<comment type="subunit">
    <text evidence="1">NDH is composed of at least 16 different subunits, 5 of which are encoded in the nucleus.</text>
</comment>
<comment type="subcellular location">
    <subcellularLocation>
        <location evidence="1">Plastid</location>
        <location evidence="1">Chloroplast thylakoid membrane</location>
        <topology evidence="1">Multi-pass membrane protein</topology>
    </subcellularLocation>
</comment>
<comment type="similarity">
    <text evidence="3">Belongs to the complex I subunit 6 family.</text>
</comment>
<geneLocation type="chloroplast"/>
<dbReference type="EC" id="7.1.1.-"/>
<dbReference type="EMBL" id="AJ428413">
    <property type="protein sequence ID" value="CAD28775.1"/>
    <property type="molecule type" value="Genomic_DNA"/>
</dbReference>
<dbReference type="RefSeq" id="NP_862808.1">
    <property type="nucleotide sequence ID" value="NC_004993.1"/>
</dbReference>
<dbReference type="SMR" id="Q7YJT1"/>
<dbReference type="GeneID" id="2597991"/>
<dbReference type="GO" id="GO:0009535">
    <property type="term" value="C:chloroplast thylakoid membrane"/>
    <property type="evidence" value="ECO:0007669"/>
    <property type="project" value="UniProtKB-SubCell"/>
</dbReference>
<dbReference type="GO" id="GO:0008137">
    <property type="term" value="F:NADH dehydrogenase (ubiquinone) activity"/>
    <property type="evidence" value="ECO:0007669"/>
    <property type="project" value="InterPro"/>
</dbReference>
<dbReference type="GO" id="GO:0048038">
    <property type="term" value="F:quinone binding"/>
    <property type="evidence" value="ECO:0007669"/>
    <property type="project" value="UniProtKB-KW"/>
</dbReference>
<dbReference type="FunFam" id="1.20.120.1200:FF:000002">
    <property type="entry name" value="NAD(P)H-quinone oxidoreductase subunit 6, chloroplastic"/>
    <property type="match status" value="1"/>
</dbReference>
<dbReference type="Gene3D" id="1.20.120.1200">
    <property type="entry name" value="NADH-ubiquinone/plastoquinone oxidoreductase chain 6, subunit NuoJ"/>
    <property type="match status" value="1"/>
</dbReference>
<dbReference type="InterPro" id="IPR050290">
    <property type="entry name" value="NAD(P)H-Q_Oxidoreduct_6"/>
</dbReference>
<dbReference type="InterPro" id="IPR001457">
    <property type="entry name" value="NADH_UbQ/plastoQ_OxRdtase_su6"/>
</dbReference>
<dbReference type="InterPro" id="IPR042106">
    <property type="entry name" value="Nuo/plastoQ_OxRdtase_6_NuoJ"/>
</dbReference>
<dbReference type="PANTHER" id="PTHR48479">
    <property type="entry name" value="NAD(P)H-QUINONE OXIDOREDUCTASE SUBUNIT 6, CHLOROPLASTIC"/>
    <property type="match status" value="1"/>
</dbReference>
<dbReference type="PANTHER" id="PTHR48479:SF1">
    <property type="entry name" value="NAD(P)H-QUINONE OXIDOREDUCTASE SUBUNIT 6, CHLOROPLASTIC"/>
    <property type="match status" value="1"/>
</dbReference>
<dbReference type="Pfam" id="PF00499">
    <property type="entry name" value="Oxidored_q3"/>
    <property type="match status" value="1"/>
</dbReference>
<proteinExistence type="inferred from homology"/>
<evidence type="ECO:0000250" key="1"/>
<evidence type="ECO:0000255" key="2"/>
<evidence type="ECO:0000305" key="3"/>
<feature type="chain" id="PRO_0000360233" description="NAD(P)H-quinone oxidoreductase subunit 6, chloroplastic">
    <location>
        <begin position="1"/>
        <end position="176"/>
    </location>
</feature>
<feature type="transmembrane region" description="Helical" evidence="2">
    <location>
        <begin position="10"/>
        <end position="30"/>
    </location>
</feature>
<feature type="transmembrane region" description="Helical" evidence="2">
    <location>
        <begin position="32"/>
        <end position="52"/>
    </location>
</feature>
<feature type="transmembrane region" description="Helical" evidence="2">
    <location>
        <begin position="61"/>
        <end position="81"/>
    </location>
</feature>
<feature type="transmembrane region" description="Helical" evidence="2">
    <location>
        <begin position="107"/>
        <end position="127"/>
    </location>
</feature>
<feature type="transmembrane region" description="Helical" evidence="2">
    <location>
        <begin position="152"/>
        <end position="172"/>
    </location>
</feature>
<gene>
    <name type="primary">ndhG</name>
</gene>
<reference key="1">
    <citation type="journal article" date="2003" name="Plant Syst. Evol.">
        <title>The chloroplast genome of the 'basal' angiosperm Calycanthus fertilis -- structural and phylogenetic analyses.</title>
        <authorList>
            <person name="Goremykin V.V."/>
            <person name="Hirsch-Ernst K.I."/>
            <person name="Woelfl S."/>
            <person name="Hellwig F.H."/>
        </authorList>
    </citation>
    <scope>NUCLEOTIDE SEQUENCE [LARGE SCALE GENOMIC DNA]</scope>
</reference>
<protein>
    <recommendedName>
        <fullName>NAD(P)H-quinone oxidoreductase subunit 6, chloroplastic</fullName>
        <ecNumber>7.1.1.-</ecNumber>
    </recommendedName>
    <alternativeName>
        <fullName>NAD(P)H dehydrogenase subunit 6</fullName>
    </alternativeName>
    <alternativeName>
        <fullName>NADH-plastoquinone oxidoreductase subunit 6</fullName>
    </alternativeName>
</protein>
<organism>
    <name type="scientific">Calycanthus floridus var. glaucus</name>
    <name type="common">Eastern sweetshrub</name>
    <name type="synonym">Calycanthus fertilis var. ferax</name>
    <dbReference type="NCBI Taxonomy" id="212734"/>
    <lineage>
        <taxon>Eukaryota</taxon>
        <taxon>Viridiplantae</taxon>
        <taxon>Streptophyta</taxon>
        <taxon>Embryophyta</taxon>
        <taxon>Tracheophyta</taxon>
        <taxon>Spermatophyta</taxon>
        <taxon>Magnoliopsida</taxon>
        <taxon>Magnoliidae</taxon>
        <taxon>Laurales</taxon>
        <taxon>Calycanthaceae</taxon>
        <taxon>Calycanthus</taxon>
    </lineage>
</organism>
<name>NU6C_CALFG</name>
<accession>Q7YJT1</accession>
<sequence length="176" mass="19198">MDLPGPIHDILLVFLGLGLILGGLGVVLLTNPIYSAFSLGLVLVCISLFHIPSNSYFVAAAQLLIYVGAVNVLIVFAVMFMNGSEYSNDFHLWTVGDGVTSLVCTSILFSLITTIWNTSWYGIIWTTRSNQIIEQDLTSNVQQIGIRLATDFYLPFELISIILLAALIGAIAMARQ</sequence>